<proteinExistence type="evidence at transcript level"/>
<organism>
    <name type="scientific">Trypanosoma cruzi</name>
    <dbReference type="NCBI Taxonomy" id="5693"/>
    <lineage>
        <taxon>Eukaryota</taxon>
        <taxon>Discoba</taxon>
        <taxon>Euglenozoa</taxon>
        <taxon>Kinetoplastea</taxon>
        <taxon>Metakinetoplastina</taxon>
        <taxon>Trypanosomatida</taxon>
        <taxon>Trypanosomatidae</taxon>
        <taxon>Trypanosoma</taxon>
        <taxon>Schizotrypanum</taxon>
    </lineage>
</organism>
<name>8512_TRYCR</name>
<sequence>EHSGDNVRHVFLNHNFTLVASVTIEEAPSEKTPLLTALLGDAEPPYFMRLSYTADNKWETISKGDKKLTTESRPWVPKKEHQVALMLQGNKASVYIDGESLGEEAPLTVETPLEPFGFCFGACDFDDDDDGGDDDDEEDSQEESSPKESSPEKIGKKPHVTVTNVFLYNRPLNPTEMRAIKDRIPVSTRAPEPQVKIAPKPVAPAAPGSLRCLAHGKYQQHRGGQLWGEPPIPNMRQRDA</sequence>
<gene>
    <name type="primary">SA85-1.2</name>
</gene>
<keyword id="KW-0326">Glycosidase</keyword>
<keyword id="KW-0378">Hydrolase</keyword>
<keyword id="KW-0677">Repeat</keyword>
<feature type="chain" id="PRO_0000208911" description="Sialidase 85-1.2">
    <location>
        <begin position="1" status="less than"/>
        <end position="240"/>
    </location>
</feature>
<feature type="region of interest" description="Disordered" evidence="1">
    <location>
        <begin position="127"/>
        <end position="158"/>
    </location>
</feature>
<feature type="region of interest" description="Disordered" evidence="1">
    <location>
        <begin position="221"/>
        <end position="240"/>
    </location>
</feature>
<feature type="compositionally biased region" description="Acidic residues" evidence="1">
    <location>
        <begin position="127"/>
        <end position="142"/>
    </location>
</feature>
<feature type="compositionally biased region" description="Basic and acidic residues" evidence="1">
    <location>
        <begin position="144"/>
        <end position="155"/>
    </location>
</feature>
<feature type="non-terminal residue">
    <location>
        <position position="1"/>
    </location>
</feature>
<dbReference type="EC" id="3.2.1.18"/>
<dbReference type="EMBL" id="X53546">
    <property type="protein sequence ID" value="CAA37618.1"/>
    <property type="molecule type" value="mRNA"/>
</dbReference>
<dbReference type="PIR" id="S11293">
    <property type="entry name" value="S11293"/>
</dbReference>
<dbReference type="SMR" id="P18270"/>
<dbReference type="CAZy" id="GH33">
    <property type="family name" value="Glycoside Hydrolase Family 33"/>
</dbReference>
<dbReference type="VEuPathDB" id="TriTrypDB:BCY84_13838"/>
<dbReference type="VEuPathDB" id="TriTrypDB:C3747_210g16"/>
<dbReference type="VEuPathDB" id="TriTrypDB:C4B63_94g93"/>
<dbReference type="VEuPathDB" id="TriTrypDB:ECC02_003038"/>
<dbReference type="VEuPathDB" id="TriTrypDB:Tc_MARK_8755"/>
<dbReference type="VEuPathDB" id="TriTrypDB:TcBrA4_0141070"/>
<dbReference type="VEuPathDB" id="TriTrypDB:TcCL_ESM09153"/>
<dbReference type="VEuPathDB" id="TriTrypDB:TcCLB.504491.20"/>
<dbReference type="VEuPathDB" id="TriTrypDB:TcCLB.508061.20"/>
<dbReference type="VEuPathDB" id="TriTrypDB:TcCLB.508563.20"/>
<dbReference type="VEuPathDB" id="TriTrypDB:TCDM_12903"/>
<dbReference type="VEuPathDB" id="TriTrypDB:TcG_10017"/>
<dbReference type="VEuPathDB" id="TriTrypDB:TCSYLVIO_009561"/>
<dbReference type="VEuPathDB" id="TriTrypDB:TcYC6_0130160"/>
<dbReference type="GO" id="GO:0004308">
    <property type="term" value="F:exo-alpha-sialidase activity"/>
    <property type="evidence" value="ECO:0007669"/>
    <property type="project" value="UniProtKB-EC"/>
</dbReference>
<dbReference type="Gene3D" id="2.60.120.200">
    <property type="match status" value="1"/>
</dbReference>
<dbReference type="InterPro" id="IPR013320">
    <property type="entry name" value="ConA-like_dom_sf"/>
</dbReference>
<dbReference type="InterPro" id="IPR008377">
    <property type="entry name" value="Sialidase_trypan"/>
</dbReference>
<dbReference type="InterPro" id="IPR055239">
    <property type="entry name" value="TS_C"/>
</dbReference>
<dbReference type="Pfam" id="PF22925">
    <property type="entry name" value="TS_C"/>
    <property type="match status" value="1"/>
</dbReference>
<dbReference type="PRINTS" id="PR01803">
    <property type="entry name" value="TCSIALIDASE"/>
</dbReference>
<dbReference type="SUPFAM" id="SSF49899">
    <property type="entry name" value="Concanavalin A-like lectins/glucanases"/>
    <property type="match status" value="1"/>
</dbReference>
<accession>P18270</accession>
<comment type="function">
    <text>Developmentally regulated neuraminidase implicated in parasite invasion of cells. May contribute to the pathology during T.cruzi infection by cleaving sialic acid from cells of the immune system.</text>
</comment>
<comment type="catalytic activity">
    <reaction>
        <text>Hydrolysis of alpha-(2-&gt;3)-, alpha-(2-&gt;6)-, alpha-(2-&gt;8)- glycosidic linkages of terminal sialic acid residues in oligosaccharides, glycoproteins, glycolipids, colominic acid and synthetic substrates.</text>
        <dbReference type="EC" id="3.2.1.18"/>
    </reaction>
</comment>
<comment type="developmental stage">
    <text>Mammalian stage of parasite.</text>
</comment>
<comment type="miscellaneous">
    <text>The parasite mammalian stage surface antigen exhibits extensive antigenic diversity.</text>
</comment>
<comment type="similarity">
    <text evidence="2">Belongs to the glycosyl hydrolase 33 family.</text>
</comment>
<evidence type="ECO:0000256" key="1">
    <source>
        <dbReference type="SAM" id="MobiDB-lite"/>
    </source>
</evidence>
<evidence type="ECO:0000305" key="2"/>
<reference key="1">
    <citation type="journal article" date="1990" name="J. Exp. Med.">
        <title>The major 85-kD surface antigen of the mammalian form of Trypanosoma cruzi is encoded by a large heterogeneous family of simultaneously expressed genes.</title>
        <authorList>
            <person name="Kahn S."/>
            <person name="van Voorhis W."/>
            <person name="Eisen H."/>
        </authorList>
    </citation>
    <scope>NUCLEOTIDE SEQUENCE [MRNA]</scope>
    <source>
        <strain>CL</strain>
    </source>
</reference>
<protein>
    <recommendedName>
        <fullName>Sialidase 85-1.2</fullName>
        <ecNumber>3.2.1.18</ecNumber>
    </recommendedName>
    <alternativeName>
        <fullName>Major 85 kDa surface antigen</fullName>
    </alternativeName>
    <alternativeName>
        <fullName>Neuraminidase</fullName>
        <shortName>NA</shortName>
    </alternativeName>
    <alternativeName>
        <fullName>SA85-1.2 protein</fullName>
    </alternativeName>
</protein>